<protein>
    <recommendedName>
        <fullName evidence="1">3-hydroxydecanoyl-[acyl-carrier-protein] dehydratase</fullName>
        <ecNumber evidence="1">4.2.1.59</ecNumber>
    </recommendedName>
    <alternativeName>
        <fullName evidence="1">3-hydroxyacyl-[acyl-carrier-protein] dehydratase FabA</fullName>
    </alternativeName>
    <alternativeName>
        <fullName evidence="1">Beta-hydroxydecanoyl thioester dehydrase</fullName>
    </alternativeName>
    <alternativeName>
        <fullName evidence="1">Trans-2-decenoyl-[acyl-carrier-protein] isomerase</fullName>
        <ecNumber evidence="1">5.3.3.14</ecNumber>
    </alternativeName>
</protein>
<comment type="function">
    <text evidence="1">Necessary for the introduction of cis unsaturation into fatty acids. Catalyzes the dehydration of (3R)-3-hydroxydecanoyl-ACP to E-(2)-decenoyl-ACP and then its isomerization to Z-(3)-decenoyl-ACP. Can catalyze the dehydratase reaction for beta-hydroxyacyl-ACPs with saturated chain lengths up to 16:0, being most active on intermediate chain length.</text>
</comment>
<comment type="catalytic activity">
    <reaction evidence="1">
        <text>a (3R)-hydroxyacyl-[ACP] = a (2E)-enoyl-[ACP] + H2O</text>
        <dbReference type="Rhea" id="RHEA:13097"/>
        <dbReference type="Rhea" id="RHEA-COMP:9925"/>
        <dbReference type="Rhea" id="RHEA-COMP:9945"/>
        <dbReference type="ChEBI" id="CHEBI:15377"/>
        <dbReference type="ChEBI" id="CHEBI:78784"/>
        <dbReference type="ChEBI" id="CHEBI:78827"/>
        <dbReference type="EC" id="4.2.1.59"/>
    </reaction>
</comment>
<comment type="catalytic activity">
    <reaction evidence="1">
        <text>(3R)-hydroxydecanoyl-[ACP] = (2E)-decenoyl-[ACP] + H2O</text>
        <dbReference type="Rhea" id="RHEA:41860"/>
        <dbReference type="Rhea" id="RHEA-COMP:9638"/>
        <dbReference type="Rhea" id="RHEA-COMP:9639"/>
        <dbReference type="ChEBI" id="CHEBI:15377"/>
        <dbReference type="ChEBI" id="CHEBI:78466"/>
        <dbReference type="ChEBI" id="CHEBI:78467"/>
    </reaction>
</comment>
<comment type="catalytic activity">
    <reaction evidence="1">
        <text>(2E)-decenoyl-[ACP] = (3Z)-decenoyl-[ACP]</text>
        <dbReference type="Rhea" id="RHEA:23568"/>
        <dbReference type="Rhea" id="RHEA-COMP:9639"/>
        <dbReference type="Rhea" id="RHEA-COMP:9927"/>
        <dbReference type="ChEBI" id="CHEBI:78467"/>
        <dbReference type="ChEBI" id="CHEBI:78798"/>
        <dbReference type="EC" id="5.3.3.14"/>
    </reaction>
</comment>
<comment type="pathway">
    <text evidence="1">Lipid metabolism; fatty acid biosynthesis.</text>
</comment>
<comment type="subunit">
    <text evidence="1">Homodimer.</text>
</comment>
<comment type="subcellular location">
    <subcellularLocation>
        <location evidence="1">Cytoplasm</location>
    </subcellularLocation>
</comment>
<comment type="similarity">
    <text evidence="1">Belongs to the thioester dehydratase family. FabA subfamily.</text>
</comment>
<organism>
    <name type="scientific">Haemophilus ducreyi (strain 35000HP / ATCC 700724)</name>
    <dbReference type="NCBI Taxonomy" id="233412"/>
    <lineage>
        <taxon>Bacteria</taxon>
        <taxon>Pseudomonadati</taxon>
        <taxon>Pseudomonadota</taxon>
        <taxon>Gammaproteobacteria</taxon>
        <taxon>Pasteurellales</taxon>
        <taxon>Pasteurellaceae</taxon>
        <taxon>Haemophilus</taxon>
    </lineage>
</organism>
<keyword id="KW-0963">Cytoplasm</keyword>
<keyword id="KW-0275">Fatty acid biosynthesis</keyword>
<keyword id="KW-0276">Fatty acid metabolism</keyword>
<keyword id="KW-0413">Isomerase</keyword>
<keyword id="KW-0444">Lipid biosynthesis</keyword>
<keyword id="KW-0443">Lipid metabolism</keyword>
<keyword id="KW-0456">Lyase</keyword>
<keyword id="KW-1185">Reference proteome</keyword>
<accession>Q7U343</accession>
<gene>
    <name evidence="1" type="primary">fabA</name>
    <name type="ordered locus">HD_0181</name>
</gene>
<feature type="chain" id="PRO_0000091598" description="3-hydroxydecanoyl-[acyl-carrier-protein] dehydratase">
    <location>
        <begin position="1"/>
        <end position="176"/>
    </location>
</feature>
<feature type="active site" evidence="1">
    <location>
        <position position="75"/>
    </location>
</feature>
<dbReference type="EC" id="4.2.1.59" evidence="1"/>
<dbReference type="EC" id="5.3.3.14" evidence="1"/>
<dbReference type="EMBL" id="AE017143">
    <property type="protein sequence ID" value="AAP95174.1"/>
    <property type="molecule type" value="Genomic_DNA"/>
</dbReference>
<dbReference type="RefSeq" id="WP_010944228.1">
    <property type="nucleotide sequence ID" value="NC_002940.2"/>
</dbReference>
<dbReference type="SMR" id="Q7U343"/>
<dbReference type="STRING" id="233412.HD_0181"/>
<dbReference type="KEGG" id="hdu:HD_0181"/>
<dbReference type="eggNOG" id="COG0764">
    <property type="taxonomic scope" value="Bacteria"/>
</dbReference>
<dbReference type="HOGENOM" id="CLU_097925_0_0_6"/>
<dbReference type="OrthoDB" id="9786735at2"/>
<dbReference type="UniPathway" id="UPA00094"/>
<dbReference type="Proteomes" id="UP000001022">
    <property type="component" value="Chromosome"/>
</dbReference>
<dbReference type="GO" id="GO:0005737">
    <property type="term" value="C:cytoplasm"/>
    <property type="evidence" value="ECO:0007669"/>
    <property type="project" value="UniProtKB-SubCell"/>
</dbReference>
<dbReference type="GO" id="GO:0019171">
    <property type="term" value="F:(3R)-hydroxyacyl-[acyl-carrier-protein] dehydratase activity"/>
    <property type="evidence" value="ECO:0007669"/>
    <property type="project" value="UniProtKB-UniRule"/>
</dbReference>
<dbReference type="GO" id="GO:0034017">
    <property type="term" value="F:trans-2-decenoyl-acyl-carrier-protein isomerase activity"/>
    <property type="evidence" value="ECO:0007669"/>
    <property type="project" value="UniProtKB-UniRule"/>
</dbReference>
<dbReference type="GO" id="GO:0006636">
    <property type="term" value="P:unsaturated fatty acid biosynthetic process"/>
    <property type="evidence" value="ECO:0007669"/>
    <property type="project" value="UniProtKB-UniRule"/>
</dbReference>
<dbReference type="CDD" id="cd01287">
    <property type="entry name" value="FabA"/>
    <property type="match status" value="1"/>
</dbReference>
<dbReference type="FunFam" id="3.10.129.10:FF:000003">
    <property type="entry name" value="3-hydroxydecanoyl-[acyl-carrier-protein] dehydratase"/>
    <property type="match status" value="1"/>
</dbReference>
<dbReference type="Gene3D" id="3.10.129.10">
    <property type="entry name" value="Hotdog Thioesterase"/>
    <property type="match status" value="1"/>
</dbReference>
<dbReference type="HAMAP" id="MF_00405">
    <property type="entry name" value="FabA"/>
    <property type="match status" value="1"/>
</dbReference>
<dbReference type="InterPro" id="IPR010083">
    <property type="entry name" value="FabA"/>
</dbReference>
<dbReference type="InterPro" id="IPR013114">
    <property type="entry name" value="FabA_FabZ"/>
</dbReference>
<dbReference type="InterPro" id="IPR029069">
    <property type="entry name" value="HotDog_dom_sf"/>
</dbReference>
<dbReference type="NCBIfam" id="TIGR01749">
    <property type="entry name" value="fabA"/>
    <property type="match status" value="1"/>
</dbReference>
<dbReference type="NCBIfam" id="NF003509">
    <property type="entry name" value="PRK05174.1"/>
    <property type="match status" value="1"/>
</dbReference>
<dbReference type="PANTHER" id="PTHR30272">
    <property type="entry name" value="3-HYDROXYACYL-[ACYL-CARRIER-PROTEIN] DEHYDRATASE"/>
    <property type="match status" value="1"/>
</dbReference>
<dbReference type="PANTHER" id="PTHR30272:SF8">
    <property type="entry name" value="3-HYDROXYDECANOYL-[ACYL-CARRIER-PROTEIN] DEHYDRATASE"/>
    <property type="match status" value="1"/>
</dbReference>
<dbReference type="Pfam" id="PF07977">
    <property type="entry name" value="FabA"/>
    <property type="match status" value="1"/>
</dbReference>
<dbReference type="SUPFAM" id="SSF54637">
    <property type="entry name" value="Thioesterase/thiol ester dehydrase-isomerase"/>
    <property type="match status" value="1"/>
</dbReference>
<evidence type="ECO:0000255" key="1">
    <source>
        <dbReference type="HAMAP-Rule" id="MF_00405"/>
    </source>
</evidence>
<sequence>MNNCTPNIKSSYGYEDLLASGRGELFGKEGPQLPAPTMLMMDRVNLMTENGGLFDKGYIEAELDIHPDLPFFGCHFIGDPVMPGCLGLDAMWQLVGFFLGWIGGKGKGRALGVGEVKFTGQILPTAKKVTYRIHMKRVINRKLVMGLADGEVEVDGRVIYTATDLKVGLFQDTSSF</sequence>
<proteinExistence type="inferred from homology"/>
<name>FABA_HAEDU</name>
<reference key="1">
    <citation type="submission" date="2003-06" db="EMBL/GenBank/DDBJ databases">
        <title>The complete genome sequence of Haemophilus ducreyi.</title>
        <authorList>
            <person name="Munson R.S. Jr."/>
            <person name="Ray W.C."/>
            <person name="Mahairas G."/>
            <person name="Sabo P."/>
            <person name="Mungur R."/>
            <person name="Johnson L."/>
            <person name="Nguyen D."/>
            <person name="Wang J."/>
            <person name="Forst C."/>
            <person name="Hood L."/>
        </authorList>
    </citation>
    <scope>NUCLEOTIDE SEQUENCE [LARGE SCALE GENOMIC DNA]</scope>
    <source>
        <strain>35000HP / ATCC 700724</strain>
    </source>
</reference>